<name>Y320_CALBD</name>
<comment type="function">
    <text evidence="1">Displays ATPase and GTPase activities.</text>
</comment>
<comment type="similarity">
    <text evidence="1">Belongs to the RapZ-like family.</text>
</comment>
<accession>B9MN04</accession>
<feature type="chain" id="PRO_0000383210" description="Nucleotide-binding protein Athe_0320">
    <location>
        <begin position="1"/>
        <end position="291"/>
    </location>
</feature>
<feature type="binding site" evidence="1">
    <location>
        <begin position="9"/>
        <end position="16"/>
    </location>
    <ligand>
        <name>ATP</name>
        <dbReference type="ChEBI" id="CHEBI:30616"/>
    </ligand>
</feature>
<feature type="binding site" evidence="1">
    <location>
        <begin position="60"/>
        <end position="63"/>
    </location>
    <ligand>
        <name>GTP</name>
        <dbReference type="ChEBI" id="CHEBI:37565"/>
    </ligand>
</feature>
<reference key="1">
    <citation type="submission" date="2009-01" db="EMBL/GenBank/DDBJ databases">
        <title>Complete sequence of chromosome of Caldicellulosiruptor becscii DSM 6725.</title>
        <authorList>
            <person name="Lucas S."/>
            <person name="Copeland A."/>
            <person name="Lapidus A."/>
            <person name="Glavina del Rio T."/>
            <person name="Tice H."/>
            <person name="Bruce D."/>
            <person name="Goodwin L."/>
            <person name="Pitluck S."/>
            <person name="Sims D."/>
            <person name="Meincke L."/>
            <person name="Brettin T."/>
            <person name="Detter J.C."/>
            <person name="Han C."/>
            <person name="Larimer F."/>
            <person name="Land M."/>
            <person name="Hauser L."/>
            <person name="Kyrpides N."/>
            <person name="Ovchinnikova G."/>
            <person name="Kataeva I."/>
            <person name="Adams M.W.W."/>
        </authorList>
    </citation>
    <scope>NUCLEOTIDE SEQUENCE [LARGE SCALE GENOMIC DNA]</scope>
    <source>
        <strain>ATCC BAA-1888 / DSM 6725 / KCTC 15123 / Z-1320</strain>
    </source>
</reference>
<proteinExistence type="inferred from homology"/>
<organism>
    <name type="scientific">Caldicellulosiruptor bescii (strain ATCC BAA-1888 / DSM 6725 / KCTC 15123 / Z-1320)</name>
    <name type="common">Anaerocellum thermophilum</name>
    <dbReference type="NCBI Taxonomy" id="521460"/>
    <lineage>
        <taxon>Bacteria</taxon>
        <taxon>Bacillati</taxon>
        <taxon>Bacillota</taxon>
        <taxon>Bacillota incertae sedis</taxon>
        <taxon>Caldicellulosiruptorales</taxon>
        <taxon>Caldicellulosiruptoraceae</taxon>
        <taxon>Caldicellulosiruptor</taxon>
    </lineage>
</organism>
<protein>
    <recommendedName>
        <fullName evidence="1">Nucleotide-binding protein Athe_0320</fullName>
    </recommendedName>
</protein>
<dbReference type="EMBL" id="CP001393">
    <property type="protein sequence ID" value="ACM59460.1"/>
    <property type="molecule type" value="Genomic_DNA"/>
</dbReference>
<dbReference type="SMR" id="B9MN04"/>
<dbReference type="STRING" id="521460.Athe_0320"/>
<dbReference type="KEGG" id="ate:Athe_0320"/>
<dbReference type="eggNOG" id="COG1660">
    <property type="taxonomic scope" value="Bacteria"/>
</dbReference>
<dbReference type="HOGENOM" id="CLU_059558_0_0_9"/>
<dbReference type="Proteomes" id="UP000007723">
    <property type="component" value="Chromosome"/>
</dbReference>
<dbReference type="GO" id="GO:0005524">
    <property type="term" value="F:ATP binding"/>
    <property type="evidence" value="ECO:0007669"/>
    <property type="project" value="UniProtKB-UniRule"/>
</dbReference>
<dbReference type="GO" id="GO:0005525">
    <property type="term" value="F:GTP binding"/>
    <property type="evidence" value="ECO:0007669"/>
    <property type="project" value="UniProtKB-UniRule"/>
</dbReference>
<dbReference type="Gene3D" id="3.40.50.300">
    <property type="entry name" value="P-loop containing nucleotide triphosphate hydrolases"/>
    <property type="match status" value="1"/>
</dbReference>
<dbReference type="HAMAP" id="MF_00636">
    <property type="entry name" value="RapZ_like"/>
    <property type="match status" value="1"/>
</dbReference>
<dbReference type="InterPro" id="IPR027417">
    <property type="entry name" value="P-loop_NTPase"/>
</dbReference>
<dbReference type="InterPro" id="IPR005337">
    <property type="entry name" value="RapZ-like"/>
</dbReference>
<dbReference type="InterPro" id="IPR053930">
    <property type="entry name" value="RapZ-like_N"/>
</dbReference>
<dbReference type="InterPro" id="IPR053931">
    <property type="entry name" value="RapZ_C"/>
</dbReference>
<dbReference type="NCBIfam" id="NF003828">
    <property type="entry name" value="PRK05416.1"/>
    <property type="match status" value="1"/>
</dbReference>
<dbReference type="PANTHER" id="PTHR30448">
    <property type="entry name" value="RNASE ADAPTER PROTEIN RAPZ"/>
    <property type="match status" value="1"/>
</dbReference>
<dbReference type="PANTHER" id="PTHR30448:SF0">
    <property type="entry name" value="RNASE ADAPTER PROTEIN RAPZ"/>
    <property type="match status" value="1"/>
</dbReference>
<dbReference type="Pfam" id="PF22740">
    <property type="entry name" value="PapZ_C"/>
    <property type="match status" value="1"/>
</dbReference>
<dbReference type="Pfam" id="PF03668">
    <property type="entry name" value="RapZ-like_N"/>
    <property type="match status" value="1"/>
</dbReference>
<dbReference type="PIRSF" id="PIRSF005052">
    <property type="entry name" value="P-loopkin"/>
    <property type="match status" value="1"/>
</dbReference>
<dbReference type="SUPFAM" id="SSF52540">
    <property type="entry name" value="P-loop containing nucleoside triphosphate hydrolases"/>
    <property type="match status" value="1"/>
</dbReference>
<keyword id="KW-0067">ATP-binding</keyword>
<keyword id="KW-0342">GTP-binding</keyword>
<keyword id="KW-0547">Nucleotide-binding</keyword>
<sequence>MLEIVIITGMSGAGKSLAIRAFEDMGFFCIDNLPPQFLPKIAELASATKEKISRIAAVVDIRGGELFDDFKDVLQELKKDDRNFKLLFLDAHDEVLIKRYKETRRKHPLSHEGDGSILEAIQKEREKLEDIKRYADFVIDTSTLLPKDLKEKLFEIFVQQKSKEAMLITIMSFGFKYGLPLDADLVFDVRFIPNPFYVDTLKYKTGKDPEVKEYVLKWDVTKEFLQKLFDLILFLIPNYAEEGKGQLVIAIGCTGGKHRSVTVAEELKKTIENQGYKVSIFHRDIEKDIKG</sequence>
<evidence type="ECO:0000255" key="1">
    <source>
        <dbReference type="HAMAP-Rule" id="MF_00636"/>
    </source>
</evidence>
<gene>
    <name type="ordered locus">Athe_0320</name>
</gene>